<gene>
    <name evidence="1" type="primary">grpE</name>
    <name type="ordered locus">RPE_0351</name>
</gene>
<protein>
    <recommendedName>
        <fullName evidence="1">Protein GrpE</fullName>
    </recommendedName>
    <alternativeName>
        <fullName evidence="1">HSP-70 cofactor</fullName>
    </alternativeName>
</protein>
<proteinExistence type="inferred from homology"/>
<feature type="chain" id="PRO_1000053633" description="Protein GrpE">
    <location>
        <begin position="1"/>
        <end position="207"/>
    </location>
</feature>
<feature type="region of interest" description="Disordered" evidence="2">
    <location>
        <begin position="1"/>
        <end position="33"/>
    </location>
</feature>
<name>GRPE_RHOP5</name>
<reference key="1">
    <citation type="submission" date="2006-09" db="EMBL/GenBank/DDBJ databases">
        <title>Complete sequence of Rhodopseudomonas palustris BisA53.</title>
        <authorList>
            <consortium name="US DOE Joint Genome Institute"/>
            <person name="Copeland A."/>
            <person name="Lucas S."/>
            <person name="Lapidus A."/>
            <person name="Barry K."/>
            <person name="Detter J.C."/>
            <person name="Glavina del Rio T."/>
            <person name="Hammon N."/>
            <person name="Israni S."/>
            <person name="Dalin E."/>
            <person name="Tice H."/>
            <person name="Pitluck S."/>
            <person name="Chain P."/>
            <person name="Malfatti S."/>
            <person name="Shin M."/>
            <person name="Vergez L."/>
            <person name="Schmutz J."/>
            <person name="Larimer F."/>
            <person name="Land M."/>
            <person name="Hauser L."/>
            <person name="Pelletier D.A."/>
            <person name="Kyrpides N."/>
            <person name="Kim E."/>
            <person name="Harwood C.S."/>
            <person name="Oda Y."/>
            <person name="Richardson P."/>
        </authorList>
    </citation>
    <scope>NUCLEOTIDE SEQUENCE [LARGE SCALE GENOMIC DNA]</scope>
    <source>
        <strain>BisA53</strain>
    </source>
</reference>
<evidence type="ECO:0000255" key="1">
    <source>
        <dbReference type="HAMAP-Rule" id="MF_01151"/>
    </source>
</evidence>
<evidence type="ECO:0000256" key="2">
    <source>
        <dbReference type="SAM" id="MobiDB-lite"/>
    </source>
</evidence>
<dbReference type="EMBL" id="CP000463">
    <property type="protein sequence ID" value="ABJ04310.1"/>
    <property type="molecule type" value="Genomic_DNA"/>
</dbReference>
<dbReference type="SMR" id="Q07US4"/>
<dbReference type="STRING" id="316055.RPE_0351"/>
<dbReference type="KEGG" id="rpe:RPE_0351"/>
<dbReference type="eggNOG" id="COG0576">
    <property type="taxonomic scope" value="Bacteria"/>
</dbReference>
<dbReference type="HOGENOM" id="CLU_057217_6_2_5"/>
<dbReference type="OrthoDB" id="9789811at2"/>
<dbReference type="GO" id="GO:0005737">
    <property type="term" value="C:cytoplasm"/>
    <property type="evidence" value="ECO:0007669"/>
    <property type="project" value="UniProtKB-SubCell"/>
</dbReference>
<dbReference type="GO" id="GO:0000774">
    <property type="term" value="F:adenyl-nucleotide exchange factor activity"/>
    <property type="evidence" value="ECO:0007669"/>
    <property type="project" value="InterPro"/>
</dbReference>
<dbReference type="GO" id="GO:0042803">
    <property type="term" value="F:protein homodimerization activity"/>
    <property type="evidence" value="ECO:0007669"/>
    <property type="project" value="InterPro"/>
</dbReference>
<dbReference type="GO" id="GO:0051087">
    <property type="term" value="F:protein-folding chaperone binding"/>
    <property type="evidence" value="ECO:0007669"/>
    <property type="project" value="InterPro"/>
</dbReference>
<dbReference type="GO" id="GO:0051082">
    <property type="term" value="F:unfolded protein binding"/>
    <property type="evidence" value="ECO:0007669"/>
    <property type="project" value="TreeGrafter"/>
</dbReference>
<dbReference type="GO" id="GO:0006457">
    <property type="term" value="P:protein folding"/>
    <property type="evidence" value="ECO:0007669"/>
    <property type="project" value="InterPro"/>
</dbReference>
<dbReference type="CDD" id="cd00446">
    <property type="entry name" value="GrpE"/>
    <property type="match status" value="1"/>
</dbReference>
<dbReference type="FunFam" id="2.30.22.10:FF:000001">
    <property type="entry name" value="Protein GrpE"/>
    <property type="match status" value="1"/>
</dbReference>
<dbReference type="Gene3D" id="3.90.20.20">
    <property type="match status" value="1"/>
</dbReference>
<dbReference type="Gene3D" id="2.30.22.10">
    <property type="entry name" value="Head domain of nucleotide exchange factor GrpE"/>
    <property type="match status" value="1"/>
</dbReference>
<dbReference type="HAMAP" id="MF_01151">
    <property type="entry name" value="GrpE"/>
    <property type="match status" value="1"/>
</dbReference>
<dbReference type="InterPro" id="IPR000740">
    <property type="entry name" value="GrpE"/>
</dbReference>
<dbReference type="InterPro" id="IPR013805">
    <property type="entry name" value="GrpE_coiled_coil"/>
</dbReference>
<dbReference type="InterPro" id="IPR009012">
    <property type="entry name" value="GrpE_head"/>
</dbReference>
<dbReference type="NCBIfam" id="NF010739">
    <property type="entry name" value="PRK14141.1"/>
    <property type="match status" value="1"/>
</dbReference>
<dbReference type="PANTHER" id="PTHR21237">
    <property type="entry name" value="GRPE PROTEIN"/>
    <property type="match status" value="1"/>
</dbReference>
<dbReference type="PANTHER" id="PTHR21237:SF23">
    <property type="entry name" value="GRPE PROTEIN HOMOLOG, MITOCHONDRIAL"/>
    <property type="match status" value="1"/>
</dbReference>
<dbReference type="Pfam" id="PF01025">
    <property type="entry name" value="GrpE"/>
    <property type="match status" value="1"/>
</dbReference>
<dbReference type="PRINTS" id="PR00773">
    <property type="entry name" value="GRPEPROTEIN"/>
</dbReference>
<dbReference type="SUPFAM" id="SSF58014">
    <property type="entry name" value="Coiled-coil domain of nucleotide exchange factor GrpE"/>
    <property type="match status" value="1"/>
</dbReference>
<dbReference type="SUPFAM" id="SSF51064">
    <property type="entry name" value="Head domain of nucleotide exchange factor GrpE"/>
    <property type="match status" value="1"/>
</dbReference>
<dbReference type="PROSITE" id="PS01071">
    <property type="entry name" value="GRPE"/>
    <property type="match status" value="1"/>
</dbReference>
<organism>
    <name type="scientific">Rhodopseudomonas palustris (strain BisA53)</name>
    <dbReference type="NCBI Taxonomy" id="316055"/>
    <lineage>
        <taxon>Bacteria</taxon>
        <taxon>Pseudomonadati</taxon>
        <taxon>Pseudomonadota</taxon>
        <taxon>Alphaproteobacteria</taxon>
        <taxon>Hyphomicrobiales</taxon>
        <taxon>Nitrobacteraceae</taxon>
        <taxon>Rhodopseudomonas</taxon>
    </lineage>
</organism>
<accession>Q07US4</accession>
<sequence>MTDPNGPKDIPEQSAEAAEPVVSKPYIMPDDPEPDAVELLAKEAAEARDKMLRTLAEMENLRKRTTREVADARIYGVTAFARDVLEIADNLQRALDAVPAEARANAEPGLKALIDGVELTERSLINALEKNGVKKFDPSGQKFDPNFQQAMYEVPDASVPAGTVVQVVQAGFMLGERVLRPALVGVSKGGAKAAPAAAANGESNSAA</sequence>
<comment type="function">
    <text evidence="1">Participates actively in the response to hyperosmotic and heat shock by preventing the aggregation of stress-denatured proteins, in association with DnaK and GrpE. It is the nucleotide exchange factor for DnaK and may function as a thermosensor. Unfolded proteins bind initially to DnaJ; upon interaction with the DnaJ-bound protein, DnaK hydrolyzes its bound ATP, resulting in the formation of a stable complex. GrpE releases ADP from DnaK; ATP binding to DnaK triggers the release of the substrate protein, thus completing the reaction cycle. Several rounds of ATP-dependent interactions between DnaJ, DnaK and GrpE are required for fully efficient folding.</text>
</comment>
<comment type="subunit">
    <text evidence="1">Homodimer.</text>
</comment>
<comment type="subcellular location">
    <subcellularLocation>
        <location evidence="1">Cytoplasm</location>
    </subcellularLocation>
</comment>
<comment type="similarity">
    <text evidence="1">Belongs to the GrpE family.</text>
</comment>
<keyword id="KW-0143">Chaperone</keyword>
<keyword id="KW-0963">Cytoplasm</keyword>
<keyword id="KW-0346">Stress response</keyword>